<gene>
    <name evidence="1" type="primary">obg</name>
    <name type="ordered locus">SPN23F10000</name>
</gene>
<comment type="function">
    <text evidence="1">An essential GTPase which binds GTP, GDP and possibly (p)ppGpp with moderate affinity, with high nucleotide exchange rates and a fairly low GTP hydrolysis rate. Plays a role in control of the cell cycle, stress response, ribosome biogenesis and in those bacteria that undergo differentiation, in morphogenesis control.</text>
</comment>
<comment type="cofactor">
    <cofactor evidence="1">
        <name>Mg(2+)</name>
        <dbReference type="ChEBI" id="CHEBI:18420"/>
    </cofactor>
</comment>
<comment type="subunit">
    <text evidence="1">Monomer.</text>
</comment>
<comment type="subcellular location">
    <subcellularLocation>
        <location evidence="1">Cytoplasm</location>
    </subcellularLocation>
</comment>
<comment type="similarity">
    <text evidence="1">Belongs to the TRAFAC class OBG-HflX-like GTPase superfamily. OBG GTPase family.</text>
</comment>
<keyword id="KW-0963">Cytoplasm</keyword>
<keyword id="KW-0342">GTP-binding</keyword>
<keyword id="KW-0378">Hydrolase</keyword>
<keyword id="KW-0460">Magnesium</keyword>
<keyword id="KW-0479">Metal-binding</keyword>
<keyword id="KW-0547">Nucleotide-binding</keyword>
<sequence length="434" mass="48160">MFLDTAKIKVKAGNGGDGMVAFRREKYVPNGGPWGGDGGRGGNVVFVVDEGLRTLMDFRYNRHFKADSGEKGMTKGMHGRGAEDLRVRVPQGTTVRDAETGKVLTDLIEHGQEFIVAHGGRGGRGNIRFATPKNPAPEISENGEPGQERELQLELKILADVGLVGFPSVGKSTLLSVITSAKPKIGAYHFTTIVPNLGMVRTQSGESFAVADLPGLIEGASQGVGLGTQFLRHIERTRVILHIIDMSASEGRDPYEDYLAINKELESYNLRLMERPQIIVANKMDMPESQENLEEFKKKLSENYDEFEELPAIFPISGLTKQGLATLLDATAELLDKTPEFLLYDESDMEEEAYYGFDEEEKAFEISRDDDATWVLSGEKLMKLFNMTNFDRDESVMKFARQLRGMGVDEALRARGAKDGDLVRIGKFEFEFVD</sequence>
<reference key="1">
    <citation type="journal article" date="2009" name="J. Bacteriol.">
        <title>Role of conjugative elements in the evolution of the multidrug-resistant pandemic clone Streptococcus pneumoniae Spain23F ST81.</title>
        <authorList>
            <person name="Croucher N.J."/>
            <person name="Walker D."/>
            <person name="Romero P."/>
            <person name="Lennard N."/>
            <person name="Paterson G.K."/>
            <person name="Bason N.C."/>
            <person name="Mitchell A.M."/>
            <person name="Quail M.A."/>
            <person name="Andrew P.W."/>
            <person name="Parkhill J."/>
            <person name="Bentley S.D."/>
            <person name="Mitchell T.J."/>
        </authorList>
    </citation>
    <scope>NUCLEOTIDE SEQUENCE [LARGE SCALE GENOMIC DNA]</scope>
    <source>
        <strain>ATCC 700669 / Spain 23F-1</strain>
    </source>
</reference>
<name>OBG_STRPJ</name>
<evidence type="ECO:0000255" key="1">
    <source>
        <dbReference type="HAMAP-Rule" id="MF_01454"/>
    </source>
</evidence>
<evidence type="ECO:0000255" key="2">
    <source>
        <dbReference type="PROSITE-ProRule" id="PRU01229"/>
    </source>
</evidence>
<evidence type="ECO:0000255" key="3">
    <source>
        <dbReference type="PROSITE-ProRule" id="PRU01231"/>
    </source>
</evidence>
<protein>
    <recommendedName>
        <fullName evidence="1">GTPase Obg</fullName>
        <ecNumber evidence="1">3.6.5.-</ecNumber>
    </recommendedName>
    <alternativeName>
        <fullName evidence="1">GTP-binding protein Obg</fullName>
    </alternativeName>
</protein>
<accession>B8ZPS8</accession>
<proteinExistence type="inferred from homology"/>
<organism>
    <name type="scientific">Streptococcus pneumoniae (strain ATCC 700669 / Spain 23F-1)</name>
    <dbReference type="NCBI Taxonomy" id="561276"/>
    <lineage>
        <taxon>Bacteria</taxon>
        <taxon>Bacillati</taxon>
        <taxon>Bacillota</taxon>
        <taxon>Bacilli</taxon>
        <taxon>Lactobacillales</taxon>
        <taxon>Streptococcaceae</taxon>
        <taxon>Streptococcus</taxon>
    </lineage>
</organism>
<feature type="chain" id="PRO_0000386298" description="GTPase Obg">
    <location>
        <begin position="1"/>
        <end position="434"/>
    </location>
</feature>
<feature type="domain" description="Obg" evidence="3">
    <location>
        <begin position="1"/>
        <end position="158"/>
    </location>
</feature>
<feature type="domain" description="OBG-type G" evidence="1">
    <location>
        <begin position="159"/>
        <end position="336"/>
    </location>
</feature>
<feature type="domain" description="OCT" evidence="2">
    <location>
        <begin position="356"/>
        <end position="434"/>
    </location>
</feature>
<feature type="binding site" evidence="1">
    <location>
        <begin position="165"/>
        <end position="172"/>
    </location>
    <ligand>
        <name>GTP</name>
        <dbReference type="ChEBI" id="CHEBI:37565"/>
    </ligand>
</feature>
<feature type="binding site" evidence="1">
    <location>
        <position position="172"/>
    </location>
    <ligand>
        <name>Mg(2+)</name>
        <dbReference type="ChEBI" id="CHEBI:18420"/>
    </ligand>
</feature>
<feature type="binding site" evidence="1">
    <location>
        <begin position="190"/>
        <end position="194"/>
    </location>
    <ligand>
        <name>GTP</name>
        <dbReference type="ChEBI" id="CHEBI:37565"/>
    </ligand>
</feature>
<feature type="binding site" evidence="1">
    <location>
        <position position="192"/>
    </location>
    <ligand>
        <name>Mg(2+)</name>
        <dbReference type="ChEBI" id="CHEBI:18420"/>
    </ligand>
</feature>
<feature type="binding site" evidence="1">
    <location>
        <begin position="212"/>
        <end position="215"/>
    </location>
    <ligand>
        <name>GTP</name>
        <dbReference type="ChEBI" id="CHEBI:37565"/>
    </ligand>
</feature>
<feature type="binding site" evidence="1">
    <location>
        <begin position="282"/>
        <end position="285"/>
    </location>
    <ligand>
        <name>GTP</name>
        <dbReference type="ChEBI" id="CHEBI:37565"/>
    </ligand>
</feature>
<feature type="binding site" evidence="1">
    <location>
        <begin position="317"/>
        <end position="319"/>
    </location>
    <ligand>
        <name>GTP</name>
        <dbReference type="ChEBI" id="CHEBI:37565"/>
    </ligand>
</feature>
<dbReference type="EC" id="3.6.5.-" evidence="1"/>
<dbReference type="EMBL" id="FM211187">
    <property type="protein sequence ID" value="CAR68824.1"/>
    <property type="molecule type" value="Genomic_DNA"/>
</dbReference>
<dbReference type="SMR" id="B8ZPS8"/>
<dbReference type="KEGG" id="sne:SPN23F10000"/>
<dbReference type="HOGENOM" id="CLU_011747_2_1_9"/>
<dbReference type="GO" id="GO:0005737">
    <property type="term" value="C:cytoplasm"/>
    <property type="evidence" value="ECO:0007669"/>
    <property type="project" value="UniProtKB-SubCell"/>
</dbReference>
<dbReference type="GO" id="GO:0005525">
    <property type="term" value="F:GTP binding"/>
    <property type="evidence" value="ECO:0007669"/>
    <property type="project" value="UniProtKB-UniRule"/>
</dbReference>
<dbReference type="GO" id="GO:0003924">
    <property type="term" value="F:GTPase activity"/>
    <property type="evidence" value="ECO:0007669"/>
    <property type="project" value="UniProtKB-UniRule"/>
</dbReference>
<dbReference type="GO" id="GO:0000287">
    <property type="term" value="F:magnesium ion binding"/>
    <property type="evidence" value="ECO:0007669"/>
    <property type="project" value="InterPro"/>
</dbReference>
<dbReference type="GO" id="GO:0042254">
    <property type="term" value="P:ribosome biogenesis"/>
    <property type="evidence" value="ECO:0007669"/>
    <property type="project" value="UniProtKB-UniRule"/>
</dbReference>
<dbReference type="CDD" id="cd01898">
    <property type="entry name" value="Obg"/>
    <property type="match status" value="1"/>
</dbReference>
<dbReference type="FunFam" id="2.70.210.12:FF:000001">
    <property type="entry name" value="GTPase Obg"/>
    <property type="match status" value="1"/>
</dbReference>
<dbReference type="FunFam" id="3.40.50.300:FF:000515">
    <property type="entry name" value="GTPase Obg"/>
    <property type="match status" value="1"/>
</dbReference>
<dbReference type="Gene3D" id="3.30.300.350">
    <property type="entry name" value="GTP-binding protein OBG, C-terminal domain"/>
    <property type="match status" value="1"/>
</dbReference>
<dbReference type="Gene3D" id="2.70.210.12">
    <property type="entry name" value="GTP1/OBG domain"/>
    <property type="match status" value="1"/>
</dbReference>
<dbReference type="Gene3D" id="3.40.50.300">
    <property type="entry name" value="P-loop containing nucleotide triphosphate hydrolases"/>
    <property type="match status" value="1"/>
</dbReference>
<dbReference type="HAMAP" id="MF_01454">
    <property type="entry name" value="GTPase_Obg"/>
    <property type="match status" value="1"/>
</dbReference>
<dbReference type="InterPro" id="IPR031167">
    <property type="entry name" value="G_OBG"/>
</dbReference>
<dbReference type="InterPro" id="IPR006073">
    <property type="entry name" value="GTP-bd"/>
</dbReference>
<dbReference type="InterPro" id="IPR014100">
    <property type="entry name" value="GTP-bd_Obg/CgtA"/>
</dbReference>
<dbReference type="InterPro" id="IPR036346">
    <property type="entry name" value="GTP-bd_prot_GTP1/OBG_C_sf"/>
</dbReference>
<dbReference type="InterPro" id="IPR006074">
    <property type="entry name" value="GTP1-OBG_CS"/>
</dbReference>
<dbReference type="InterPro" id="IPR006169">
    <property type="entry name" value="GTP1_OBG_dom"/>
</dbReference>
<dbReference type="InterPro" id="IPR036726">
    <property type="entry name" value="GTP1_OBG_dom_sf"/>
</dbReference>
<dbReference type="InterPro" id="IPR045086">
    <property type="entry name" value="OBG_GTPase"/>
</dbReference>
<dbReference type="InterPro" id="IPR015349">
    <property type="entry name" value="OCT_dom"/>
</dbReference>
<dbReference type="InterPro" id="IPR027417">
    <property type="entry name" value="P-loop_NTPase"/>
</dbReference>
<dbReference type="InterPro" id="IPR005225">
    <property type="entry name" value="Small_GTP-bd"/>
</dbReference>
<dbReference type="NCBIfam" id="TIGR02729">
    <property type="entry name" value="Obg_CgtA"/>
    <property type="match status" value="1"/>
</dbReference>
<dbReference type="NCBIfam" id="TIGR03595">
    <property type="entry name" value="Obg_CgtA_exten"/>
    <property type="match status" value="1"/>
</dbReference>
<dbReference type="NCBIfam" id="NF008954">
    <property type="entry name" value="PRK12296.1"/>
    <property type="match status" value="1"/>
</dbReference>
<dbReference type="NCBIfam" id="NF008955">
    <property type="entry name" value="PRK12297.1"/>
    <property type="match status" value="1"/>
</dbReference>
<dbReference type="NCBIfam" id="NF008956">
    <property type="entry name" value="PRK12299.1"/>
    <property type="match status" value="1"/>
</dbReference>
<dbReference type="NCBIfam" id="TIGR00231">
    <property type="entry name" value="small_GTP"/>
    <property type="match status" value="1"/>
</dbReference>
<dbReference type="PANTHER" id="PTHR11702">
    <property type="entry name" value="DEVELOPMENTALLY REGULATED GTP-BINDING PROTEIN-RELATED"/>
    <property type="match status" value="1"/>
</dbReference>
<dbReference type="PANTHER" id="PTHR11702:SF31">
    <property type="entry name" value="MITOCHONDRIAL RIBOSOME-ASSOCIATED GTPASE 2"/>
    <property type="match status" value="1"/>
</dbReference>
<dbReference type="Pfam" id="PF09269">
    <property type="entry name" value="DUF1967"/>
    <property type="match status" value="1"/>
</dbReference>
<dbReference type="Pfam" id="PF01018">
    <property type="entry name" value="GTP1_OBG"/>
    <property type="match status" value="1"/>
</dbReference>
<dbReference type="Pfam" id="PF01926">
    <property type="entry name" value="MMR_HSR1"/>
    <property type="match status" value="1"/>
</dbReference>
<dbReference type="PIRSF" id="PIRSF002401">
    <property type="entry name" value="GTP_bd_Obg/CgtA"/>
    <property type="match status" value="1"/>
</dbReference>
<dbReference type="PRINTS" id="PR00326">
    <property type="entry name" value="GTP1OBG"/>
</dbReference>
<dbReference type="SUPFAM" id="SSF102741">
    <property type="entry name" value="Obg GTP-binding protein C-terminal domain"/>
    <property type="match status" value="1"/>
</dbReference>
<dbReference type="SUPFAM" id="SSF82051">
    <property type="entry name" value="Obg GTP-binding protein N-terminal domain"/>
    <property type="match status" value="1"/>
</dbReference>
<dbReference type="SUPFAM" id="SSF52540">
    <property type="entry name" value="P-loop containing nucleoside triphosphate hydrolases"/>
    <property type="match status" value="1"/>
</dbReference>
<dbReference type="PROSITE" id="PS51710">
    <property type="entry name" value="G_OBG"/>
    <property type="match status" value="1"/>
</dbReference>
<dbReference type="PROSITE" id="PS00905">
    <property type="entry name" value="GTP1_OBG"/>
    <property type="match status" value="1"/>
</dbReference>
<dbReference type="PROSITE" id="PS51883">
    <property type="entry name" value="OBG"/>
    <property type="match status" value="1"/>
</dbReference>
<dbReference type="PROSITE" id="PS51881">
    <property type="entry name" value="OCT"/>
    <property type="match status" value="1"/>
</dbReference>